<reference key="1">
    <citation type="journal article" date="2010" name="Genome Biol. Evol.">
        <title>Continuing evolution of Burkholderia mallei through genome reduction and large-scale rearrangements.</title>
        <authorList>
            <person name="Losada L."/>
            <person name="Ronning C.M."/>
            <person name="DeShazer D."/>
            <person name="Woods D."/>
            <person name="Fedorova N."/>
            <person name="Kim H.S."/>
            <person name="Shabalina S.A."/>
            <person name="Pearson T.R."/>
            <person name="Brinkac L."/>
            <person name="Tan P."/>
            <person name="Nandi T."/>
            <person name="Crabtree J."/>
            <person name="Badger J."/>
            <person name="Beckstrom-Sternberg S."/>
            <person name="Saqib M."/>
            <person name="Schutzer S.E."/>
            <person name="Keim P."/>
            <person name="Nierman W.C."/>
        </authorList>
    </citation>
    <scope>NUCLEOTIDE SEQUENCE [LARGE SCALE GENOMIC DNA]</scope>
    <source>
        <strain>1710b</strain>
    </source>
</reference>
<feature type="chain" id="PRO_0000243402" description="Large ribosomal subunit protein bL12">
    <location>
        <begin position="1"/>
        <end position="124"/>
    </location>
</feature>
<organism>
    <name type="scientific">Burkholderia pseudomallei (strain 1710b)</name>
    <dbReference type="NCBI Taxonomy" id="320372"/>
    <lineage>
        <taxon>Bacteria</taxon>
        <taxon>Pseudomonadati</taxon>
        <taxon>Pseudomonadota</taxon>
        <taxon>Betaproteobacteria</taxon>
        <taxon>Burkholderiales</taxon>
        <taxon>Burkholderiaceae</taxon>
        <taxon>Burkholderia</taxon>
        <taxon>pseudomallei group</taxon>
    </lineage>
</organism>
<protein>
    <recommendedName>
        <fullName evidence="1">Large ribosomal subunit protein bL12</fullName>
    </recommendedName>
    <alternativeName>
        <fullName evidence="2">50S ribosomal protein L7/L12</fullName>
    </alternativeName>
</protein>
<name>RL7_BURP1</name>
<accession>Q3JMQ2</accession>
<dbReference type="EMBL" id="CP000124">
    <property type="protein sequence ID" value="ABA48481.1"/>
    <property type="molecule type" value="Genomic_DNA"/>
</dbReference>
<dbReference type="RefSeq" id="WP_004198366.1">
    <property type="nucleotide sequence ID" value="NC_007434.1"/>
</dbReference>
<dbReference type="SMR" id="Q3JMQ2"/>
<dbReference type="EnsemblBacteria" id="ABA48481">
    <property type="protein sequence ID" value="ABA48481"/>
    <property type="gene ID" value="BURPS1710b_3787"/>
</dbReference>
<dbReference type="GeneID" id="93061842"/>
<dbReference type="KEGG" id="bpm:BURPS1710b_3787"/>
<dbReference type="HOGENOM" id="CLU_086499_3_2_4"/>
<dbReference type="Proteomes" id="UP000002700">
    <property type="component" value="Chromosome I"/>
</dbReference>
<dbReference type="GO" id="GO:0022625">
    <property type="term" value="C:cytosolic large ribosomal subunit"/>
    <property type="evidence" value="ECO:0007669"/>
    <property type="project" value="TreeGrafter"/>
</dbReference>
<dbReference type="GO" id="GO:0003729">
    <property type="term" value="F:mRNA binding"/>
    <property type="evidence" value="ECO:0007669"/>
    <property type="project" value="TreeGrafter"/>
</dbReference>
<dbReference type="GO" id="GO:0003735">
    <property type="term" value="F:structural constituent of ribosome"/>
    <property type="evidence" value="ECO:0007669"/>
    <property type="project" value="InterPro"/>
</dbReference>
<dbReference type="GO" id="GO:0006412">
    <property type="term" value="P:translation"/>
    <property type="evidence" value="ECO:0007669"/>
    <property type="project" value="UniProtKB-UniRule"/>
</dbReference>
<dbReference type="CDD" id="cd00387">
    <property type="entry name" value="Ribosomal_L7_L12"/>
    <property type="match status" value="1"/>
</dbReference>
<dbReference type="FunFam" id="3.30.1390.10:FF:000001">
    <property type="entry name" value="50S ribosomal protein L7/L12"/>
    <property type="match status" value="1"/>
</dbReference>
<dbReference type="Gene3D" id="3.30.1390.10">
    <property type="match status" value="1"/>
</dbReference>
<dbReference type="Gene3D" id="1.20.5.710">
    <property type="entry name" value="Single helix bin"/>
    <property type="match status" value="1"/>
</dbReference>
<dbReference type="HAMAP" id="MF_00368">
    <property type="entry name" value="Ribosomal_bL12"/>
    <property type="match status" value="1"/>
</dbReference>
<dbReference type="InterPro" id="IPR000206">
    <property type="entry name" value="Ribosomal_bL12"/>
</dbReference>
<dbReference type="InterPro" id="IPR013823">
    <property type="entry name" value="Ribosomal_bL12_C"/>
</dbReference>
<dbReference type="InterPro" id="IPR014719">
    <property type="entry name" value="Ribosomal_bL12_C/ClpS-like"/>
</dbReference>
<dbReference type="InterPro" id="IPR008932">
    <property type="entry name" value="Ribosomal_bL12_oligo"/>
</dbReference>
<dbReference type="InterPro" id="IPR036235">
    <property type="entry name" value="Ribosomal_bL12_oligo_N_sf"/>
</dbReference>
<dbReference type="NCBIfam" id="TIGR00855">
    <property type="entry name" value="L12"/>
    <property type="match status" value="1"/>
</dbReference>
<dbReference type="PANTHER" id="PTHR45987">
    <property type="entry name" value="39S RIBOSOMAL PROTEIN L12"/>
    <property type="match status" value="1"/>
</dbReference>
<dbReference type="PANTHER" id="PTHR45987:SF4">
    <property type="entry name" value="LARGE RIBOSOMAL SUBUNIT PROTEIN BL12M"/>
    <property type="match status" value="1"/>
</dbReference>
<dbReference type="Pfam" id="PF00542">
    <property type="entry name" value="Ribosomal_L12"/>
    <property type="match status" value="1"/>
</dbReference>
<dbReference type="Pfam" id="PF16320">
    <property type="entry name" value="Ribosomal_L12_N"/>
    <property type="match status" value="1"/>
</dbReference>
<dbReference type="SUPFAM" id="SSF54736">
    <property type="entry name" value="ClpS-like"/>
    <property type="match status" value="1"/>
</dbReference>
<dbReference type="SUPFAM" id="SSF48300">
    <property type="entry name" value="Ribosomal protein L7/12, oligomerisation (N-terminal) domain"/>
    <property type="match status" value="1"/>
</dbReference>
<evidence type="ECO:0000255" key="1">
    <source>
        <dbReference type="HAMAP-Rule" id="MF_00368"/>
    </source>
</evidence>
<evidence type="ECO:0000305" key="2"/>
<proteinExistence type="inferred from homology"/>
<comment type="function">
    <text evidence="1">Forms part of the ribosomal stalk which helps the ribosome interact with GTP-bound translation factors. Is thus essential for accurate translation.</text>
</comment>
<comment type="subunit">
    <text evidence="1">Homodimer. Part of the ribosomal stalk of the 50S ribosomal subunit. Forms a multimeric L10(L12)X complex, where L10 forms an elongated spine to which 2 to 4 L12 dimers bind in a sequential fashion. Binds GTP-bound translation factors.</text>
</comment>
<comment type="similarity">
    <text evidence="1">Belongs to the bacterial ribosomal protein bL12 family.</text>
</comment>
<keyword id="KW-0687">Ribonucleoprotein</keyword>
<keyword id="KW-0689">Ribosomal protein</keyword>
<sequence length="124" mass="12559">MAIAKEDILAAVEGMTVLELNELVKAFEEKFGVSAAAVAVAGPAAGGAAAAAEEKTEFTVVLAEAGSNKVAVIKAVREITGLGLKEAKDLVDGAPKPVKEGVDKASADEAKKKLEDAGAKVELK</sequence>
<gene>
    <name evidence="1" type="primary">rplL</name>
    <name type="ordered locus">BURPS1710b_3787</name>
</gene>